<reference key="1">
    <citation type="submission" date="2004-11" db="EMBL/GenBank/DDBJ databases">
        <authorList>
            <consortium name="The German cDNA consortium"/>
        </authorList>
    </citation>
    <scope>NUCLEOTIDE SEQUENCE [LARGE SCALE MRNA]</scope>
    <source>
        <tissue>Heart</tissue>
    </source>
</reference>
<gene>
    <name type="primary">SLIRP</name>
</gene>
<evidence type="ECO:0000250" key="1"/>
<evidence type="ECO:0000250" key="2">
    <source>
        <dbReference type="UniProtKB" id="Q9GZT3"/>
    </source>
</evidence>
<evidence type="ECO:0000255" key="3"/>
<evidence type="ECO:0000255" key="4">
    <source>
        <dbReference type="PROSITE-ProRule" id="PRU00176"/>
    </source>
</evidence>
<keyword id="KW-0496">Mitochondrion</keyword>
<keyword id="KW-0539">Nucleus</keyword>
<keyword id="KW-0597">Phosphoprotein</keyword>
<keyword id="KW-1185">Reference proteome</keyword>
<keyword id="KW-0678">Repressor</keyword>
<keyword id="KW-0694">RNA-binding</keyword>
<keyword id="KW-0804">Transcription</keyword>
<keyword id="KW-0805">Transcription regulation</keyword>
<keyword id="KW-0809">Transit peptide</keyword>
<feature type="transit peptide" description="Mitochondrion" evidence="3">
    <location>
        <begin position="1"/>
        <end status="unknown"/>
    </location>
</feature>
<feature type="chain" id="PRO_0000247053" description="SRA stem-loop-interacting RNA-binding protein, mitochondrial">
    <location>
        <begin status="unknown"/>
        <end position="109"/>
    </location>
</feature>
<feature type="domain" description="RRM" evidence="4">
    <location>
        <begin position="19"/>
        <end position="103"/>
    </location>
</feature>
<feature type="modified residue" description="Phosphoserine" evidence="2">
    <location>
        <position position="15"/>
    </location>
</feature>
<feature type="modified residue" description="Phosphothreonine" evidence="2">
    <location>
        <position position="101"/>
    </location>
</feature>
<feature type="modified residue" description="Phosphoserine" evidence="2">
    <location>
        <position position="102"/>
    </location>
</feature>
<protein>
    <recommendedName>
        <fullName>SRA stem-loop-interacting RNA-binding protein, mitochondrial</fullName>
    </recommendedName>
</protein>
<organism>
    <name type="scientific">Pongo abelii</name>
    <name type="common">Sumatran orangutan</name>
    <name type="synonym">Pongo pygmaeus abelii</name>
    <dbReference type="NCBI Taxonomy" id="9601"/>
    <lineage>
        <taxon>Eukaryota</taxon>
        <taxon>Metazoa</taxon>
        <taxon>Chordata</taxon>
        <taxon>Craniata</taxon>
        <taxon>Vertebrata</taxon>
        <taxon>Euteleostomi</taxon>
        <taxon>Mammalia</taxon>
        <taxon>Eutheria</taxon>
        <taxon>Euarchontoglires</taxon>
        <taxon>Primates</taxon>
        <taxon>Haplorrhini</taxon>
        <taxon>Catarrhini</taxon>
        <taxon>Hominidae</taxon>
        <taxon>Pongo</taxon>
    </lineage>
</organism>
<dbReference type="EMBL" id="CR859749">
    <property type="protein sequence ID" value="CAH91907.1"/>
    <property type="molecule type" value="mRNA"/>
</dbReference>
<dbReference type="RefSeq" id="NP_001126105.1">
    <property type="nucleotide sequence ID" value="NM_001132633.1"/>
</dbReference>
<dbReference type="SMR" id="Q5R8K3"/>
<dbReference type="FunCoup" id="Q5R8K3">
    <property type="interactions" value="1997"/>
</dbReference>
<dbReference type="STRING" id="9601.ENSPPYP00000006858"/>
<dbReference type="GeneID" id="100447493"/>
<dbReference type="CTD" id="81892"/>
<dbReference type="InParanoid" id="Q5R8K3"/>
<dbReference type="Proteomes" id="UP000001595">
    <property type="component" value="Unplaced"/>
</dbReference>
<dbReference type="GO" id="GO:0005739">
    <property type="term" value="C:mitochondrion"/>
    <property type="evidence" value="ECO:0007669"/>
    <property type="project" value="UniProtKB-SubCell"/>
</dbReference>
<dbReference type="GO" id="GO:0005634">
    <property type="term" value="C:nucleus"/>
    <property type="evidence" value="ECO:0007669"/>
    <property type="project" value="UniProtKB-SubCell"/>
</dbReference>
<dbReference type="GO" id="GO:0003723">
    <property type="term" value="F:RNA binding"/>
    <property type="evidence" value="ECO:0007669"/>
    <property type="project" value="UniProtKB-KW"/>
</dbReference>
<dbReference type="CDD" id="cd12242">
    <property type="entry name" value="RRM_SLIRP"/>
    <property type="match status" value="1"/>
</dbReference>
<dbReference type="FunFam" id="3.30.70.330:FF:000960">
    <property type="entry name" value="SRA stem-loop-interacting RNA-binding protein, mitochondrial"/>
    <property type="match status" value="1"/>
</dbReference>
<dbReference type="Gene3D" id="3.30.70.330">
    <property type="match status" value="1"/>
</dbReference>
<dbReference type="InterPro" id="IPR012677">
    <property type="entry name" value="Nucleotide-bd_a/b_plait_sf"/>
</dbReference>
<dbReference type="InterPro" id="IPR035979">
    <property type="entry name" value="RBD_domain_sf"/>
</dbReference>
<dbReference type="InterPro" id="IPR000504">
    <property type="entry name" value="RRM_dom"/>
</dbReference>
<dbReference type="InterPro" id="IPR052462">
    <property type="entry name" value="SLIRP/GR-RBP-like"/>
</dbReference>
<dbReference type="InterPro" id="IPR034152">
    <property type="entry name" value="SLIRP_RRM"/>
</dbReference>
<dbReference type="PANTHER" id="PTHR48027">
    <property type="entry name" value="HETEROGENEOUS NUCLEAR RIBONUCLEOPROTEIN 87F-RELATED"/>
    <property type="match status" value="1"/>
</dbReference>
<dbReference type="Pfam" id="PF00076">
    <property type="entry name" value="RRM_1"/>
    <property type="match status" value="1"/>
</dbReference>
<dbReference type="SMART" id="SM00360">
    <property type="entry name" value="RRM"/>
    <property type="match status" value="1"/>
</dbReference>
<dbReference type="SUPFAM" id="SSF54928">
    <property type="entry name" value="RNA-binding domain, RBD"/>
    <property type="match status" value="1"/>
</dbReference>
<dbReference type="PROSITE" id="PS50102">
    <property type="entry name" value="RRM"/>
    <property type="match status" value="1"/>
</dbReference>
<sequence>MAASAARGAAALRRSINQPVAFVRRIPWTAASSQLKEHFAQFGHVRRCILPFDKETGFHRGLGWVQFSSEGGLRNALQQENHIIDGVKVQVHTRRPKLPQTSDDEKKDF</sequence>
<accession>Q5R8K3</accession>
<name>SLIRP_PONAB</name>
<proteinExistence type="inferred from homology"/>
<comment type="function">
    <text evidence="1">RNA-binding protein that acts as a nuclear receptor corepressor. Probably acts by binding the SRA RNA, and repressing the SRA-mediated nuclear receptor coactivation. Binds the STR7 loop of SRA RNA. Also able to repress glucocorticoid (GR), androgen (AR), thyroid (TR) and VDR-mediated transactivation (By similarity).</text>
</comment>
<comment type="subcellular location">
    <subcellularLocation>
        <location evidence="1">Mitochondrion</location>
    </subcellularLocation>
    <subcellularLocation>
        <location evidence="1">Nucleus</location>
    </subcellularLocation>
    <text evidence="1">Predominantly mitochondrial. Some fraction is nuclear. In the nucleus, it is recruited to nuclear receptor target promoters (By similarity).</text>
</comment>